<gene>
    <name evidence="32 34" type="primary">VPS35</name>
    <name type="synonym">MEM3</name>
    <name type="ORF">TCCCTA00141</name>
</gene>
<reference key="1">
    <citation type="journal article" date="2000" name="Biochem. Biophys. Res. Commun.">
        <title>Human homologues of yeast vacuolar protein sorting 29 and 35.</title>
        <authorList>
            <person name="Edgar A.J."/>
            <person name="Polak J.M."/>
        </authorList>
    </citation>
    <scope>NUCLEOTIDE SEQUENCE [MRNA]</scope>
    <source>
        <tissue>Lung</tissue>
    </source>
</reference>
<reference key="2">
    <citation type="journal article" date="2000" name="Genomics">
        <title>Cloning and characterization of human VPS35 and mouse Vps35 and mapping of VPS35 to human chromosome 16q13-q21.</title>
        <authorList>
            <person name="Zhang P."/>
            <person name="Yu L."/>
            <person name="Gao J."/>
            <person name="Fu Q."/>
            <person name="Dai F."/>
            <person name="Zhao Y."/>
            <person name="Zheng L."/>
            <person name="Zhao S."/>
        </authorList>
    </citation>
    <scope>NUCLEOTIDE SEQUENCE [MRNA]</scope>
    <source>
        <tissue>Testis</tissue>
    </source>
</reference>
<reference key="3">
    <citation type="journal article" date="2000" name="Mol. Biol. Cell">
        <title>Human orthologs of yeast vacuolar protein sorting proteins Vps26, 29, and 35: assembly into multimeric complexes.</title>
        <authorList>
            <person name="Renfrew Haft C."/>
            <person name="de la Luz Sierra M."/>
            <person name="Bafford R."/>
            <person name="Lesniak M.A."/>
            <person name="Barr V.A."/>
            <person name="Taylor S.I."/>
        </authorList>
    </citation>
    <scope>NUCLEOTIDE SEQUENCE [MRNA]</scope>
    <scope>INTERACTION WITH VPS29; VPS26A; SNX1 AND SNX2</scope>
    <source>
        <tissue>Colon</tissue>
    </source>
</reference>
<reference key="4">
    <citation type="submission" date="1999-09" db="EMBL/GenBank/DDBJ databases">
        <title>A novel gene expressed in human pheochromocytoma.</title>
        <authorList>
            <person name="Peng Y."/>
            <person name="Li Y."/>
            <person name="Tu Y."/>
            <person name="Xu S."/>
            <person name="Han Z."/>
            <person name="Fu G."/>
            <person name="Chen Z."/>
        </authorList>
    </citation>
    <scope>NUCLEOTIDE SEQUENCE [LARGE SCALE MRNA]</scope>
    <source>
        <tissue>Pheochromocytoma</tissue>
    </source>
</reference>
<reference key="5">
    <citation type="journal article" date="2004" name="Nat. Genet.">
        <title>Complete sequencing and characterization of 21,243 full-length human cDNAs.</title>
        <authorList>
            <person name="Ota T."/>
            <person name="Suzuki Y."/>
            <person name="Nishikawa T."/>
            <person name="Otsuki T."/>
            <person name="Sugiyama T."/>
            <person name="Irie R."/>
            <person name="Wakamatsu A."/>
            <person name="Hayashi K."/>
            <person name="Sato H."/>
            <person name="Nagai K."/>
            <person name="Kimura K."/>
            <person name="Makita H."/>
            <person name="Sekine M."/>
            <person name="Obayashi M."/>
            <person name="Nishi T."/>
            <person name="Shibahara T."/>
            <person name="Tanaka T."/>
            <person name="Ishii S."/>
            <person name="Yamamoto J."/>
            <person name="Saito K."/>
            <person name="Kawai Y."/>
            <person name="Isono Y."/>
            <person name="Nakamura Y."/>
            <person name="Nagahari K."/>
            <person name="Murakami K."/>
            <person name="Yasuda T."/>
            <person name="Iwayanagi T."/>
            <person name="Wagatsuma M."/>
            <person name="Shiratori A."/>
            <person name="Sudo H."/>
            <person name="Hosoiri T."/>
            <person name="Kaku Y."/>
            <person name="Kodaira H."/>
            <person name="Kondo H."/>
            <person name="Sugawara M."/>
            <person name="Takahashi M."/>
            <person name="Kanda K."/>
            <person name="Yokoi T."/>
            <person name="Furuya T."/>
            <person name="Kikkawa E."/>
            <person name="Omura Y."/>
            <person name="Abe K."/>
            <person name="Kamihara K."/>
            <person name="Katsuta N."/>
            <person name="Sato K."/>
            <person name="Tanikawa M."/>
            <person name="Yamazaki M."/>
            <person name="Ninomiya K."/>
            <person name="Ishibashi T."/>
            <person name="Yamashita H."/>
            <person name="Murakawa K."/>
            <person name="Fujimori K."/>
            <person name="Tanai H."/>
            <person name="Kimata M."/>
            <person name="Watanabe M."/>
            <person name="Hiraoka S."/>
            <person name="Chiba Y."/>
            <person name="Ishida S."/>
            <person name="Ono Y."/>
            <person name="Takiguchi S."/>
            <person name="Watanabe S."/>
            <person name="Yosida M."/>
            <person name="Hotuta T."/>
            <person name="Kusano J."/>
            <person name="Kanehori K."/>
            <person name="Takahashi-Fujii A."/>
            <person name="Hara H."/>
            <person name="Tanase T.-O."/>
            <person name="Nomura Y."/>
            <person name="Togiya S."/>
            <person name="Komai F."/>
            <person name="Hara R."/>
            <person name="Takeuchi K."/>
            <person name="Arita M."/>
            <person name="Imose N."/>
            <person name="Musashino K."/>
            <person name="Yuuki H."/>
            <person name="Oshima A."/>
            <person name="Sasaki N."/>
            <person name="Aotsuka S."/>
            <person name="Yoshikawa Y."/>
            <person name="Matsunawa H."/>
            <person name="Ichihara T."/>
            <person name="Shiohata N."/>
            <person name="Sano S."/>
            <person name="Moriya S."/>
            <person name="Momiyama H."/>
            <person name="Satoh N."/>
            <person name="Takami S."/>
            <person name="Terashima Y."/>
            <person name="Suzuki O."/>
            <person name="Nakagawa S."/>
            <person name="Senoh A."/>
            <person name="Mizoguchi H."/>
            <person name="Goto Y."/>
            <person name="Shimizu F."/>
            <person name="Wakebe H."/>
            <person name="Hishigaki H."/>
            <person name="Watanabe T."/>
            <person name="Sugiyama A."/>
            <person name="Takemoto M."/>
            <person name="Kawakami B."/>
            <person name="Yamazaki M."/>
            <person name="Watanabe K."/>
            <person name="Kumagai A."/>
            <person name="Itakura S."/>
            <person name="Fukuzumi Y."/>
            <person name="Fujimori Y."/>
            <person name="Komiyama M."/>
            <person name="Tashiro H."/>
            <person name="Tanigami A."/>
            <person name="Fujiwara T."/>
            <person name="Ono T."/>
            <person name="Yamada K."/>
            <person name="Fujii Y."/>
            <person name="Ozaki K."/>
            <person name="Hirao M."/>
            <person name="Ohmori Y."/>
            <person name="Kawabata A."/>
            <person name="Hikiji T."/>
            <person name="Kobatake N."/>
            <person name="Inagaki H."/>
            <person name="Ikema Y."/>
            <person name="Okamoto S."/>
            <person name="Okitani R."/>
            <person name="Kawakami T."/>
            <person name="Noguchi S."/>
            <person name="Itoh T."/>
            <person name="Shigeta K."/>
            <person name="Senba T."/>
            <person name="Matsumura K."/>
            <person name="Nakajima Y."/>
            <person name="Mizuno T."/>
            <person name="Morinaga M."/>
            <person name="Sasaki M."/>
            <person name="Togashi T."/>
            <person name="Oyama M."/>
            <person name="Hata H."/>
            <person name="Watanabe M."/>
            <person name="Komatsu T."/>
            <person name="Mizushima-Sugano J."/>
            <person name="Satoh T."/>
            <person name="Shirai Y."/>
            <person name="Takahashi Y."/>
            <person name="Nakagawa K."/>
            <person name="Okumura K."/>
            <person name="Nagase T."/>
            <person name="Nomura N."/>
            <person name="Kikuchi H."/>
            <person name="Masuho Y."/>
            <person name="Yamashita R."/>
            <person name="Nakai K."/>
            <person name="Yada T."/>
            <person name="Nakamura Y."/>
            <person name="Ohara O."/>
            <person name="Isogai T."/>
            <person name="Sugano S."/>
        </authorList>
    </citation>
    <scope>NUCLEOTIDE SEQUENCE [LARGE SCALE MRNA]</scope>
    <source>
        <tissue>Ileal mucosa</tissue>
        <tissue>Placenta</tissue>
        <tissue>Teratocarcinoma</tissue>
    </source>
</reference>
<reference key="6">
    <citation type="journal article" date="2001" name="Genome Res.">
        <title>Towards a catalog of human genes and proteins: sequencing and analysis of 500 novel complete protein coding human cDNAs.</title>
        <authorList>
            <person name="Wiemann S."/>
            <person name="Weil B."/>
            <person name="Wellenreuther R."/>
            <person name="Gassenhuber J."/>
            <person name="Glassl S."/>
            <person name="Ansorge W."/>
            <person name="Boecher M."/>
            <person name="Bloecker H."/>
            <person name="Bauersachs S."/>
            <person name="Blum H."/>
            <person name="Lauber J."/>
            <person name="Duesterhoeft A."/>
            <person name="Beyer A."/>
            <person name="Koehrer K."/>
            <person name="Strack N."/>
            <person name="Mewes H.-W."/>
            <person name="Ottenwaelder B."/>
            <person name="Obermaier B."/>
            <person name="Tampe J."/>
            <person name="Heubner D."/>
            <person name="Wambutt R."/>
            <person name="Korn B."/>
            <person name="Klein M."/>
            <person name="Poustka A."/>
        </authorList>
    </citation>
    <scope>NUCLEOTIDE SEQUENCE [LARGE SCALE MRNA]</scope>
    <source>
        <tissue>Testis</tissue>
    </source>
</reference>
<reference key="7">
    <citation type="journal article" date="2004" name="Genome Res.">
        <title>The status, quality, and expansion of the NIH full-length cDNA project: the Mammalian Gene Collection (MGC).</title>
        <authorList>
            <consortium name="The MGC Project Team"/>
        </authorList>
    </citation>
    <scope>NUCLEOTIDE SEQUENCE [LARGE SCALE MRNA]</scope>
    <source>
        <tissue>Brain</tissue>
        <tissue>Placenta</tissue>
        <tissue>Prostate</tissue>
    </source>
</reference>
<reference key="8">
    <citation type="submission" date="2000-07" db="EMBL/GenBank/DDBJ databases">
        <title>Pediatric leukemia cDNA sequencing project.</title>
        <authorList>
            <person name="Zhou J."/>
            <person name="Yu W."/>
            <person name="Tang H."/>
            <person name="Mei G."/>
            <person name="Tsang Y.T.M."/>
            <person name="Bouck J."/>
            <person name="Gibbs R.A."/>
            <person name="Margolin J.F."/>
        </authorList>
    </citation>
    <scope>NUCLEOTIDE SEQUENCE [LARGE SCALE MRNA] OF 469-796</scope>
    <source>
        <tissue>Leukemia</tissue>
    </source>
</reference>
<reference key="9">
    <citation type="journal article" date="2004" name="J. Cell Biol.">
        <title>Role of the mammalian retromer in sorting of the cation-independent mannose 6-phosphate receptor.</title>
        <authorList>
            <person name="Arighi C.N."/>
            <person name="Hartnell L.M."/>
            <person name="Aguilar R.C."/>
            <person name="Haft C.R."/>
            <person name="Bonifacino J.S."/>
        </authorList>
    </citation>
    <scope>FUNCTION</scope>
    <scope>SUBCELLULAR LOCATION</scope>
    <scope>INTERACTION WITH IGF2R</scope>
</reference>
<reference key="10">
    <citation type="journal article" date="2004" name="Nat. Cell Biol.">
        <title>The mammalian retromer regulates transcytosis of the polymeric immunoglobulin receptor.</title>
        <authorList>
            <person name="Verges M."/>
            <person name="Luton F."/>
            <person name="Gruber C."/>
            <person name="Tiemann F."/>
            <person name="Reinders L.G."/>
            <person name="Huang L."/>
            <person name="Burlingame A.L."/>
            <person name="Haft C.R."/>
            <person name="Mostov K.E."/>
        </authorList>
    </citation>
    <scope>FUNCTION</scope>
</reference>
<reference key="11">
    <citation type="journal article" date="2007" name="Traffic">
        <title>EHD1 interacts with retromer to stabilize SNX1 tubules and facilitate endosome-to-Golgi retrieval.</title>
        <authorList>
            <person name="Gokool S."/>
            <person name="Tattersall D."/>
            <person name="Seaman M.N."/>
        </authorList>
    </citation>
    <scope>INTERACTION WITH EHD1</scope>
</reference>
<reference key="12">
    <citation type="journal article" date="2009" name="J. Cell Sci.">
        <title>Membrane recruitment of the cargo-selective retromer subcomplex is catalysed by the small GTPase Rab7 and inhibited by the Rab-GAP TBC1D5.</title>
        <authorList>
            <person name="Seaman M.N."/>
            <person name="Harbour M.E."/>
            <person name="Tattersall D."/>
            <person name="Read E."/>
            <person name="Bright N."/>
        </authorList>
    </citation>
    <scope>INTERACTION WITH RAB7A</scope>
</reference>
<reference key="13">
    <citation type="journal article" date="2009" name="Nature">
        <title>GOLPH3 modulates mTOR signalling and rapamycin sensitivity in cancer.</title>
        <authorList>
            <person name="Scott K.L."/>
            <person name="Kabbarah O."/>
            <person name="Liang M.C."/>
            <person name="Ivanova E."/>
            <person name="Anagnostou V."/>
            <person name="Wu J."/>
            <person name="Dhakal S."/>
            <person name="Wu M."/>
            <person name="Chen S."/>
            <person name="Feinberg T."/>
            <person name="Huang J."/>
            <person name="Saci A."/>
            <person name="Widlund H.R."/>
            <person name="Fisher D.E."/>
            <person name="Xiao Y."/>
            <person name="Rimm D.L."/>
            <person name="Protopopov A."/>
            <person name="Wong K.K."/>
            <person name="Chin L."/>
        </authorList>
    </citation>
    <scope>INTERACTION WITH GOLPH3</scope>
</reference>
<reference key="14">
    <citation type="journal article" date="2010" name="J. Cell Sci.">
        <title>The cargo-selective retromer complex is a recruiting hub for protein complexes that regulate endosomal tubule dynamics.</title>
        <authorList>
            <person name="Harbour M.E."/>
            <person name="Breusegem S.Y."/>
            <person name="Antrobus R."/>
            <person name="Freeman C."/>
            <person name="Reid E."/>
            <person name="Seaman M.N."/>
        </authorList>
    </citation>
    <scope>FUNCTION</scope>
</reference>
<reference key="15">
    <citation type="journal article" date="2010" name="J. Cell Sci.">
        <title>Retromer-mediated direct sorting is required for proper endosomal recycling of the mammalian iron transporter DMT1.</title>
        <authorList>
            <person name="Tabuchi M."/>
            <person name="Yanatori I."/>
            <person name="Kawai Y."/>
            <person name="Kishi F."/>
        </authorList>
    </citation>
    <scope>FUNCTION</scope>
</reference>
<reference key="16">
    <citation type="journal article" date="2010" name="Sci. Signal.">
        <title>Quantitative phosphoproteomics reveals widespread full phosphorylation site occupancy during mitosis.</title>
        <authorList>
            <person name="Olsen J.V."/>
            <person name="Vermeulen M."/>
            <person name="Santamaria A."/>
            <person name="Kumar C."/>
            <person name="Miller M.L."/>
            <person name="Jensen L.J."/>
            <person name="Gnad F."/>
            <person name="Cox J."/>
            <person name="Jensen T.S."/>
            <person name="Nigg E.A."/>
            <person name="Brunak S."/>
            <person name="Mann M."/>
        </authorList>
    </citation>
    <scope>PHOSPHORYLATION [LARGE SCALE ANALYSIS] AT SER-7</scope>
    <scope>IDENTIFICATION BY MASS SPECTROMETRY [LARGE SCALE ANALYSIS]</scope>
    <source>
        <tissue>Cervix carcinoma</tissue>
    </source>
</reference>
<reference key="17">
    <citation type="journal article" date="2011" name="BMC Syst. Biol.">
        <title>Initial characterization of the human central proteome.</title>
        <authorList>
            <person name="Burkard T.R."/>
            <person name="Planyavsky M."/>
            <person name="Kaupe I."/>
            <person name="Breitwieser F.P."/>
            <person name="Buerckstuemmer T."/>
            <person name="Bennett K.L."/>
            <person name="Superti-Furga G."/>
            <person name="Colinge J."/>
        </authorList>
    </citation>
    <scope>IDENTIFICATION BY MASS SPECTROMETRY [LARGE SCALE ANALYSIS]</scope>
</reference>
<reference key="18">
    <citation type="journal article" date="2011" name="Nat. Cell Biol.">
        <title>A SNX3-dependent retromer pathway mediates retrograde transport of the Wnt sorting receptor Wntless and is required for Wnt secretion.</title>
        <authorList>
            <person name="Harterink M."/>
            <person name="Port F."/>
            <person name="Lorenowicz M.J."/>
            <person name="McGough I.J."/>
            <person name="Silhankova M."/>
            <person name="Betist M.C."/>
            <person name="van Weering J.R."/>
            <person name="van Heesbeen R.G."/>
            <person name="Middelkoop T.C."/>
            <person name="Basler K."/>
            <person name="Cullen P.J."/>
            <person name="Korswagen H.C."/>
        </authorList>
    </citation>
    <scope>FUNCTION OF THE SNX3-RETROMER</scope>
    <scope>SUBUNIT</scope>
</reference>
<reference key="19">
    <citation type="journal article" date="2012" name="Biochem. J.">
        <title>Recruitment of the endosomal WASH complex is mediated by the extended 'tail' of Fam21 binding to the retromer protein Vps35.</title>
        <authorList>
            <person name="Harbour M.E."/>
            <person name="Breusegem S.Y."/>
            <person name="Seaman M.N."/>
        </authorList>
    </citation>
    <scope>FUNCTION</scope>
    <scope>INTERACTION WITH WASHC2C; FKBP15 AND WASHC1</scope>
</reference>
<reference key="20">
    <citation type="journal article" date="2012" name="Mol. Biol. Cell">
        <title>Multiple repeat elements within the FAM21 tail link the WASH actin regulatory complex to the retromer.</title>
        <authorList>
            <person name="Jia D."/>
            <person name="Gomez T.S."/>
            <person name="Billadeau D.D."/>
            <person name="Rosen M.K."/>
        </authorList>
    </citation>
    <scope>FUNCTION</scope>
    <scope>INTERACTION WITH WASHC2C</scope>
</reference>
<reference key="21">
    <citation type="journal article" date="2013" name="Biol. Cell">
        <title>Endosomal recruitment of the WASH complex: active sequences and mutations impairing interaction with the retromer.</title>
        <authorList>
            <person name="Helfer E."/>
            <person name="Harbour M.E."/>
            <person name="Henriot V."/>
            <person name="Lakisic G."/>
            <person name="Sousa-Blin C."/>
            <person name="Volceanov L."/>
            <person name="Seaman M.N."/>
            <person name="Gautreau A."/>
        </authorList>
    </citation>
    <scope>INTERACTION WITH VPS29 AND VPS26</scope>
    <scope>MUTAGENESIS OF LEU-108 AND HIS-675</scope>
</reference>
<reference key="22">
    <citation type="journal article" date="2013" name="Cell">
        <title>Regulation of WASH-dependent actin polymerization and protein trafficking by ubiquitination.</title>
        <authorList>
            <person name="Hao Y.H."/>
            <person name="Doyle J.M."/>
            <person name="Ramanathan S."/>
            <person name="Gomez T.S."/>
            <person name="Jia D."/>
            <person name="Xu M."/>
            <person name="Chen Z.J."/>
            <person name="Billadeau D.D."/>
            <person name="Rosen M.K."/>
            <person name="Potts P.R."/>
        </authorList>
    </citation>
    <scope>INTERACTION WITH MAGEL2</scope>
</reference>
<reference key="23">
    <citation type="journal article" date="2013" name="Nat. Cell Biol.">
        <title>A global analysis of SNX27-retromer assembly and cargo specificity reveals a function in glucose and metal ion transport.</title>
        <authorList>
            <person name="Steinberg F."/>
            <person name="Gallon M."/>
            <person name="Winfield M."/>
            <person name="Thomas E.C."/>
            <person name="Bell A.J."/>
            <person name="Heesom K.J."/>
            <person name="Tavare J.M."/>
            <person name="Cullen P.J."/>
        </authorList>
    </citation>
    <scope>FUNCTION OF THE SNX27-RETROMER</scope>
    <scope>SUBUNIT</scope>
    <scope>INTERACTION WITH SNX27 AND WASHC5</scope>
</reference>
<reference key="24">
    <citation type="journal article" date="2013" name="Neuron">
        <title>RAB7L1 interacts with LRRK2 to modify intraneuronal protein sorting and Parkinson's disease risk.</title>
        <authorList>
            <person name="MacLeod D.A."/>
            <person name="Rhinn H."/>
            <person name="Kuwahara T."/>
            <person name="Zolin A."/>
            <person name="Di Paolo G."/>
            <person name="McCabe B.D."/>
            <person name="MacCabe B.D."/>
            <person name="Marder K.S."/>
            <person name="Honig L.S."/>
            <person name="Clark L.N."/>
            <person name="Small S.A."/>
            <person name="Abeliovich A."/>
        </authorList>
    </citation>
    <scope>FUNCTION IN RETROGRADE TRANSPORT</scope>
    <scope>INTERACTION WITH LRRK2</scope>
    <scope>CHARACTERIZATION OF VARIANT PARK17 ASN-620</scope>
</reference>
<reference key="25">
    <citation type="journal article" date="2014" name="J. Proteomics">
        <title>An enzyme assisted RP-RPLC approach for in-depth analysis of human liver phosphoproteome.</title>
        <authorList>
            <person name="Bian Y."/>
            <person name="Song C."/>
            <person name="Cheng K."/>
            <person name="Dong M."/>
            <person name="Wang F."/>
            <person name="Huang J."/>
            <person name="Sun D."/>
            <person name="Wang L."/>
            <person name="Ye M."/>
            <person name="Zou H."/>
        </authorList>
    </citation>
    <scope>IDENTIFICATION BY MASS SPECTROMETRY [LARGE SCALE ANALYSIS]</scope>
    <source>
        <tissue>Liver</tissue>
    </source>
</reference>
<reference key="26">
    <citation type="journal article" date="2014" name="Proc. Natl. Acad. Sci. U.S.A.">
        <title>A mechanism for retromer endosomal coat complex assembly with cargo.</title>
        <authorList>
            <person name="Harrison M.S."/>
            <person name="Hung C.S."/>
            <person name="Liu T.T."/>
            <person name="Christiano R."/>
            <person name="Walther T.C."/>
            <person name="Burd C.G."/>
        </authorList>
    </citation>
    <scope>INTERACTION WITH SNX3 AND SLC11A2</scope>
</reference>
<reference key="27">
    <citation type="journal article" date="2014" name="Curr. Biol.">
        <title>Retromer binding to FAM21 and the WASH complex is perturbed by the Parkinson disease-linked VPS35(D620N) mutation.</title>
        <authorList>
            <person name="McGough I.J."/>
            <person name="Steinberg F."/>
            <person name="Jia D."/>
            <person name="Barbuti P.A."/>
            <person name="McMillan K.J."/>
            <person name="Heesom K.J."/>
            <person name="Whone A.L."/>
            <person name="Caldwell M.A."/>
            <person name="Billadeau D.D."/>
            <person name="Rosen M.K."/>
            <person name="Cullen P.J."/>
        </authorList>
    </citation>
    <scope>FUNCTION</scope>
    <scope>INTERACTION WITH WASHC2C</scope>
    <scope>CHARACTERIZATION OF VARIANT PARK17 ASN-620</scope>
</reference>
<reference key="28">
    <citation type="journal article" date="2014" name="Nat. Commun.">
        <title>Mutation in VPS35 associated with Parkinson's disease impairs WASH complex association and inhibits autophagy.</title>
        <authorList>
            <person name="Zavodszky E."/>
            <person name="Seaman M.N."/>
            <person name="Moreau K."/>
            <person name="Jimenez-Sanchez M."/>
            <person name="Breusegem S.Y."/>
            <person name="Harbour M.E."/>
            <person name="Rubinsztein D.C."/>
        </authorList>
    </citation>
    <scope>FUNCTION</scope>
    <scope>CHARACTERIZATION OF VARIANT PARK17 ASN-620</scope>
</reference>
<reference key="29">
    <citation type="journal article" date="2015" name="Proteomics">
        <title>N-terminome analysis of the human mitochondrial proteome.</title>
        <authorList>
            <person name="Vaca Jacome A.S."/>
            <person name="Rabilloud T."/>
            <person name="Schaeffer-Reiss C."/>
            <person name="Rompais M."/>
            <person name="Ayoub D."/>
            <person name="Lane L."/>
            <person name="Bairoch A."/>
            <person name="Van Dorsselaer A."/>
            <person name="Carapito C."/>
        </authorList>
    </citation>
    <scope>IDENTIFICATION BY MASS SPECTROMETRY [LARGE SCALE ANALYSIS]</scope>
</reference>
<reference key="30">
    <citation type="journal article" date="2015" name="PLoS Pathog.">
        <title>Direct binding of retromer to human papillomavirus type 16 minor capsid protein L2 mediates endosome exit during viral infection.</title>
        <authorList>
            <person name="Popa A."/>
            <person name="Zhang W."/>
            <person name="Harrison M.S."/>
            <person name="Goodner K."/>
            <person name="Kazakov T."/>
            <person name="Goodwin E.C."/>
            <person name="Lipovsky A."/>
            <person name="Burd C.G."/>
            <person name="DiMaio D."/>
        </authorList>
    </citation>
    <scope>INTERACTION WITH HUMAN PAPILLOMAVIRUS 16 MINOR CAPSID PROTEIN L2 (MICROBIAL INFECTION)</scope>
    <scope>FUNCTION (MICROBIAL INFECTION)</scope>
</reference>
<reference key="31">
    <citation type="journal article" date="2017" name="Nat. Cell Biol.">
        <title>Retriever is a multiprotein complex for retromer-independent endosomal cargo recycling.</title>
        <authorList>
            <person name="McNally K.E."/>
            <person name="Faulkner R."/>
            <person name="Steinberg F."/>
            <person name="Gallon M."/>
            <person name="Ghai R."/>
            <person name="Pim D."/>
            <person name="Langton P."/>
            <person name="Pearson N."/>
            <person name="Danson C.M."/>
            <person name="Naegele H."/>
            <person name="Morris L.L."/>
            <person name="Singla A."/>
            <person name="Overlee B.L."/>
            <person name="Heesom K.J."/>
            <person name="Sessions R."/>
            <person name="Banks L."/>
            <person name="Collins B.M."/>
            <person name="Berger I."/>
            <person name="Billadeau D.D."/>
            <person name="Burstein E."/>
            <person name="Cullen P.J."/>
        </authorList>
    </citation>
    <scope>FUNCTION</scope>
    <scope>SUBCELLULAR LOCATION</scope>
    <scope>INTERACTION WITH VPS26A AND VPS29</scope>
</reference>
<reference key="32">
    <citation type="journal article" date="2018" name="Cell">
        <title>Cell-Penetrating Peptide Mediates Intracellular Membrane Passage of Human Papillomavirus L2 Protein to Trigger Retrograde Trafficking.</title>
        <authorList>
            <person name="Zhang P."/>
            <person name="Monteiro da Silva G."/>
            <person name="Deatherage C."/>
            <person name="Burd C."/>
            <person name="DiMaio D."/>
        </authorList>
    </citation>
    <scope>INTERACTION WITH HUMAN PAPILLOMAVIRUS 16 MINOR CAPSID PROTEIN L2 (MICROBIAL INFECTION)</scope>
</reference>
<reference key="33">
    <citation type="journal article" date="2018" name="Nat. Commun.">
        <title>SNX3-retromer requires an evolutionary conserved MON2:DOPEY2:ATP9A complex to mediate Wntless sorting and Wnt secretion.</title>
        <authorList>
            <person name="McGough I.J."/>
            <person name="de Groot R.E.A."/>
            <person name="Jellett A.P."/>
            <person name="Betist M.C."/>
            <person name="Varandas K.C."/>
            <person name="Danson C.M."/>
            <person name="Heesom K.J."/>
            <person name="Korswagen H.C."/>
            <person name="Cullen P.J."/>
        </authorList>
    </citation>
    <scope>FUNCTION</scope>
    <scope>INTERACTION WITH SNX3</scope>
    <scope>IDENTIFICATION BY MASS SPECTROMETRY</scope>
</reference>
<reference key="34">
    <citation type="journal article" date="2007" name="Nature">
        <title>Functional architecture of the retromer cargo-recognition complex.</title>
        <authorList>
            <person name="Hierro A."/>
            <person name="Rojas A.L."/>
            <person name="Rojas R."/>
            <person name="Murthy N."/>
            <person name="Effantin G."/>
            <person name="Kajava A.V."/>
            <person name="Steven A.C."/>
            <person name="Bonifacino J.S."/>
            <person name="Hurley J.H."/>
        </authorList>
    </citation>
    <scope>X-RAY CRYSTALLOGRAPHY (2.8 ANGSTROMS) OF 483-780 IN COMPLEX WITH VPS29</scope>
    <scope>ELECTRON MICROSCOPY OF THE RETROMER COMPLEX CONTAINING VPS29; VPS35 AND VPS26</scope>
</reference>
<reference key="35">
    <citation type="journal article" date="2011" name="Am. J. Hum. Genet.">
        <title>VPS35 mutations in Parkinson disease.</title>
        <authorList>
            <person name="Vilarino-Guell C."/>
            <person name="Wider C."/>
            <person name="Ross O.A."/>
            <person name="Dachsel J.C."/>
            <person name="Kachergus J.M."/>
            <person name="Lincoln S.J."/>
            <person name="Soto-Ortolaza A.I."/>
            <person name="Cobb S.A."/>
            <person name="Wilhoite G.J."/>
            <person name="Bacon J.A."/>
            <person name="Behrouz B."/>
            <person name="Melrose H.L."/>
            <person name="Hentati E."/>
            <person name="Puschmann A."/>
            <person name="Evans D.M."/>
            <person name="Conibear E."/>
            <person name="Wasserman W.W."/>
            <person name="Aasly J.O."/>
            <person name="Burkhard P.R."/>
            <person name="Djaldetti R."/>
            <person name="Ghika J."/>
            <person name="Hentati F."/>
            <person name="Krygowska-Wajs A."/>
            <person name="Lynch T."/>
            <person name="Melamed E."/>
            <person name="Rajput A."/>
            <person name="Rajput A.H."/>
            <person name="Solida A."/>
            <person name="Wu R.M."/>
            <person name="Uitti R.J."/>
            <person name="Wszolek Z.K."/>
            <person name="Vingerhoets F."/>
            <person name="Farrer M.J."/>
        </authorList>
    </citation>
    <scope>VARIANT PARK17 ASN-620</scope>
    <scope>VARIANTS SER-316 AND VAL-737</scope>
</reference>
<reference key="36">
    <citation type="journal article" date="2011" name="Am. J. Hum. Genet.">
        <title>A mutation in VPS35, encoding a subunit of the retromer complex, causes late-onset Parkinson disease.</title>
        <authorList>
            <person name="Zimprich A."/>
            <person name="Benet-Pages A."/>
            <person name="Struhal W."/>
            <person name="Graf E."/>
            <person name="Eck S.H."/>
            <person name="Offman M.N."/>
            <person name="Haubenberger D."/>
            <person name="Spielberger S."/>
            <person name="Schulte E.C."/>
            <person name="Lichtner P."/>
            <person name="Rossle S.C."/>
            <person name="Klopp N."/>
            <person name="Wolf E."/>
            <person name="Seppi K."/>
            <person name="Pirker W."/>
            <person name="Reinthaler E."/>
            <person name="Harutyunyan A."/>
            <person name="Kralovics R."/>
            <person name="Peters A."/>
            <person name="Zimprich F."/>
            <person name="Brucke T."/>
            <person name="Poewe W."/>
            <person name="Auff E."/>
            <person name="Trenkwalder C."/>
            <person name="Rost B."/>
            <person name="Ransmayr G."/>
            <person name="Winkelmann J."/>
            <person name="Meitinger T."/>
            <person name="Strom T.M."/>
        </authorList>
    </citation>
    <scope>VARIANT PARK17 ASN-620</scope>
    <scope>VARIANTS SER-51; ILE-57; ARG-82; MET-241; TRP-524 AND MET-774</scope>
</reference>
<reference key="37">
    <citation type="journal article" date="2012" name="Neurology">
        <title>Identification of VPS35 mutations replicated in French families with Parkinson disease.</title>
        <authorList>
            <person name="Lesage S."/>
            <person name="Condroyer C."/>
            <person name="Klebe S."/>
            <person name="Honore A."/>
            <person name="Tison F."/>
            <person name="Brefel-Courbon C."/>
            <person name="Durr A."/>
            <person name="Brice A."/>
        </authorList>
    </citation>
    <scope>VARIANT PARK17 ASN-620</scope>
</reference>
<reference key="38">
    <citation type="journal article" date="2018" name="Mol. Psychiatry">
        <title>Mapping autosomal recessive intellectual disability: combined microarray and exome sequencing identifies 26 novel candidate genes in 192 consanguineous families.</title>
        <authorList>
            <person name="Harripaul R."/>
            <person name="Vasli N."/>
            <person name="Mikhailov A."/>
            <person name="Rafiq M.A."/>
            <person name="Mittal K."/>
            <person name="Windpassinger C."/>
            <person name="Sheikh T.I."/>
            <person name="Noor A."/>
            <person name="Mahmood H."/>
            <person name="Downey S."/>
            <person name="Johnson M."/>
            <person name="Vleuten K."/>
            <person name="Bell L."/>
            <person name="Ilyas M."/>
            <person name="Khan F.S."/>
            <person name="Khan V."/>
            <person name="Moradi M."/>
            <person name="Ayaz M."/>
            <person name="Naeem F."/>
            <person name="Heidari A."/>
            <person name="Ahmed I."/>
            <person name="Ghadami S."/>
            <person name="Agha Z."/>
            <person name="Zeinali S."/>
            <person name="Qamar R."/>
            <person name="Mozhdehipanah H."/>
            <person name="John P."/>
            <person name="Mir A."/>
            <person name="Ansar M."/>
            <person name="French L."/>
            <person name="Ayub M."/>
            <person name="Vincent J.B."/>
        </authorList>
    </citation>
    <scope>VARIANT PRO-469</scope>
</reference>
<keyword id="KW-0002">3D-structure</keyword>
<keyword id="KW-0963">Cytoplasm</keyword>
<keyword id="KW-0967">Endosome</keyword>
<keyword id="KW-0945">Host-virus interaction</keyword>
<keyword id="KW-0472">Membrane</keyword>
<keyword id="KW-0523">Neurodegeneration</keyword>
<keyword id="KW-0907">Parkinson disease</keyword>
<keyword id="KW-0908">Parkinsonism</keyword>
<keyword id="KW-0597">Phosphoprotein</keyword>
<keyword id="KW-0653">Protein transport</keyword>
<keyword id="KW-1267">Proteomics identification</keyword>
<keyword id="KW-1185">Reference proteome</keyword>
<keyword id="KW-0813">Transport</keyword>
<protein>
    <recommendedName>
        <fullName>Vacuolar protein sorting-associated protein 35</fullName>
        <shortName>hVPS35</shortName>
    </recommendedName>
    <alternativeName>
        <fullName>Maternal-embryonic 3</fullName>
    </alternativeName>
    <alternativeName>
        <fullName>Vesicle protein sorting 35</fullName>
    </alternativeName>
</protein>
<organism>
    <name type="scientific">Homo sapiens</name>
    <name type="common">Human</name>
    <dbReference type="NCBI Taxonomy" id="9606"/>
    <lineage>
        <taxon>Eukaryota</taxon>
        <taxon>Metazoa</taxon>
        <taxon>Chordata</taxon>
        <taxon>Craniata</taxon>
        <taxon>Vertebrata</taxon>
        <taxon>Euteleostomi</taxon>
        <taxon>Mammalia</taxon>
        <taxon>Eutheria</taxon>
        <taxon>Euarchontoglires</taxon>
        <taxon>Primates</taxon>
        <taxon>Haplorrhini</taxon>
        <taxon>Catarrhini</taxon>
        <taxon>Hominidae</taxon>
        <taxon>Homo</taxon>
    </lineage>
</organism>
<sequence>MPTTQQSPQDEQEKLLDEAIQAVKVQSFQMKRCLDKNKLMDALKHASNMLGELRTSMLSPKSYYELYMAISDELHYLEVYLTDEFAKGRKVADLYELVQYAGNIIPRLYLLITVGVVYVKSFPQSRKDILKDLVEMCRGVQHPLRGLFLRNYLLQCTRNILPDEGEPTDEETTGDISDSMDFVLLNFAEMNKLWVRMQHQGHSRDREKRERERQELRILVGTNLVRLSQLEGVNVERYKQIVLTGILEQVVNCRDALAQEYLMECIIQVFPDEFHLQTLNPFLRACAELHQNVNVKNIIIALIDRLALFAHREDGPGIPADIKLFDIFSQQVATVIQSRQDMPSEDVVSLQVSLINLAMKCYPDRVDYVDKVLETTVEIFNKLNLEHIATSSAVSKELTRLLKIPVDTYNNILTVLKLKHFHPLFEYFDYESRKSMSCYVLSNVLDYNTEIVSQDQVDSIMNLVSTLIQDQPDQPVEDPDPEDFADEQSLVGRFIHLLRSEDPDQQYLILNTARKHFGAGGNQRIRFTLPPLVFAAYQLAFRYKENSKVDDKWEKKCQKIFSFAHQTISALIKAELAELPLRLFLQGALAAGEIGFENHETVAYEFMSQAFSLYEDEISDSKAQLAAITLIIGTFERMKCFSEENHEPLRTQCALAASKLLKKPDQGRAVSTCAHLFWSGRNTDKNGEELHGGKRVMECLKKALKIANQCMDPSLQVQLFIEILNRYIYFYEKENDAVTIQVLNQLIQKIREDLPNLESSEETEQINKHFHNTLEHLRLRRESPESEGPIYEGLIL</sequence>
<accession>Q96QK1</accession>
<accession>Q561W2</accession>
<accession>Q9H016</accession>
<accession>Q9H096</accession>
<accession>Q9H4P3</accession>
<accession>Q9H8J0</accession>
<accession>Q9NRS7</accession>
<accession>Q9NVG2</accession>
<accession>Q9NX80</accession>
<accession>Q9NZK2</accession>
<proteinExistence type="evidence at protein level"/>
<evidence type="ECO:0000250" key="1">
    <source>
        <dbReference type="UniProtKB" id="Q9EQH3"/>
    </source>
</evidence>
<evidence type="ECO:0000269" key="2">
    <source>
    </source>
</evidence>
<evidence type="ECO:0000269" key="3">
    <source>
    </source>
</evidence>
<evidence type="ECO:0000269" key="4">
    <source>
    </source>
</evidence>
<evidence type="ECO:0000269" key="5">
    <source>
    </source>
</evidence>
<evidence type="ECO:0000269" key="6">
    <source>
    </source>
</evidence>
<evidence type="ECO:0000269" key="7">
    <source>
    </source>
</evidence>
<evidence type="ECO:0000269" key="8">
    <source>
    </source>
</evidence>
<evidence type="ECO:0000269" key="9">
    <source>
    </source>
</evidence>
<evidence type="ECO:0000269" key="10">
    <source>
    </source>
</evidence>
<evidence type="ECO:0000269" key="11">
    <source>
    </source>
</evidence>
<evidence type="ECO:0000269" key="12">
    <source>
    </source>
</evidence>
<evidence type="ECO:0000269" key="13">
    <source>
    </source>
</evidence>
<evidence type="ECO:0000269" key="14">
    <source>
    </source>
</evidence>
<evidence type="ECO:0000269" key="15">
    <source>
    </source>
</evidence>
<evidence type="ECO:0000269" key="16">
    <source>
    </source>
</evidence>
<evidence type="ECO:0000269" key="17">
    <source>
    </source>
</evidence>
<evidence type="ECO:0000269" key="18">
    <source>
    </source>
</evidence>
<evidence type="ECO:0000269" key="19">
    <source>
    </source>
</evidence>
<evidence type="ECO:0000269" key="20">
    <source>
    </source>
</evidence>
<evidence type="ECO:0000269" key="21">
    <source>
    </source>
</evidence>
<evidence type="ECO:0000269" key="22">
    <source>
    </source>
</evidence>
<evidence type="ECO:0000269" key="23">
    <source>
    </source>
</evidence>
<evidence type="ECO:0000269" key="24">
    <source>
    </source>
</evidence>
<evidence type="ECO:0000269" key="25">
    <source>
    </source>
</evidence>
<evidence type="ECO:0000269" key="26">
    <source>
    </source>
</evidence>
<evidence type="ECO:0000269" key="27">
    <source>
    </source>
</evidence>
<evidence type="ECO:0000303" key="28">
    <source>
    </source>
</evidence>
<evidence type="ECO:0000303" key="29">
    <source>
    </source>
</evidence>
<evidence type="ECO:0000303" key="30">
    <source>
    </source>
</evidence>
<evidence type="ECO:0000303" key="31">
    <source>
    </source>
</evidence>
<evidence type="ECO:0000303" key="32">
    <source>
    </source>
</evidence>
<evidence type="ECO:0000305" key="33"/>
<evidence type="ECO:0000312" key="34">
    <source>
        <dbReference type="HGNC" id="HGNC:13487"/>
    </source>
</evidence>
<evidence type="ECO:0007744" key="35">
    <source>
    </source>
</evidence>
<evidence type="ECO:0007829" key="36">
    <source>
        <dbReference type="PDB" id="5F0J"/>
    </source>
</evidence>
<evidence type="ECO:0007829" key="37">
    <source>
        <dbReference type="PDB" id="5F0P"/>
    </source>
</evidence>
<evidence type="ECO:0007829" key="38">
    <source>
        <dbReference type="PDB" id="5OSI"/>
    </source>
</evidence>
<comment type="function">
    <text evidence="3 4 8 9 13 17 21 22 25 27 28 29 30 31">Acts as a component of the retromer cargo-selective complex (CSC). The CSC is believed to be the core functional component of retromer or respective retromer complex variants acting to prevent missorting of selected transmembrane cargo proteins into the lysosomal degradation pathway. The recruitment of the CSC to the endosomal membrane involves RAB7A and SNX3. The CSC seems to associate with the cytoplasmic domain of cargo proteins predominantly via VPS35; however, these interactions seem to be of low affinity and retromer SNX proteins may also contribute to cargo selectivity thus questioning the classical function of the CSC. The SNX-BAR retromer mediates retrograde transport of cargo proteins from endosomes to the trans-Golgi network (TGN) and is involved in endosome-to-plasma membrane transport for cargo protein recycling. The SNX3-retromer mediates the retrograde endosome-to-TGN transport of WLS distinct from the SNX-BAR retromer pathway (PubMed:30213940). The SNX27-retromer is believed to be involved in endosome-to-plasma membrane trafficking and recycling of a broad spectrum of cargo proteins. The CSC seems to act as recruitment hub for other proteins, such as the WASH complex and TBC1D5 (Probable). Required for retrograde transport of lysosomal enzyme receptor IGF2R and SLC11A2. Required to regulate transcytosis of the polymeric immunoglobulin receptor (pIgR-pIgA) (PubMed:15078903, PubMed:15247922, PubMed:20164305). Required for endosomal localization of WASHC2C (PubMed:22070227, PubMed:28892079). Mediates the association of the CSC with the WASH complex via WASHC2 (PubMed:22070227, PubMed:24819384, PubMed:24980502). Required for the endosomal localization of TBC1D5 (PubMed:20923837).</text>
</comment>
<comment type="function">
    <text evidence="23 26">(Microbial infection) The heterotrimeric retromer cargo-selective complex (CSC) mediates the exit of human papillomavirus from the early endosome and the delivery to the Golgi apparatus.</text>
</comment>
<comment type="subunit">
    <text evidence="1 2 3 5 6 7 10 13 14 16 17 18 19 20 22 25 28 31">Component of the heterotrimeric retromer cargo-selective complex (CSC), also decribed as vacuolar protein sorting subcomplex (VPS), formed by VPS26 (VPS26A or VPS26B), VPS29 and VPS35 (PubMed:11102511, PubMed:28892079). The CSC has a highly elongated structure with VPS26 and VPS29 binding independently at opposite distal ends of VPS35 as central platform (By similarity). The CSC is believed to associate with variable sorting nexins to form functionally distinct retromer complex variants. The originally described retromer complex (also called SNX-BAR retromer) is a pentamer containing the CSC and a heterodimeric membrane-deforming subcomplex formed between SNX1 or SNX2 and SNX5 or SNX6 (also called SNX-BAR subcomplex); the respective CSC and SNX-BAR subcomplexes associate with low affinity. The CSC associates with SNX3 to form a SNX3-retromer complex. The CSC associates with SNX27, the WASH complex and the SNX-BAR subcomplex to form the SNX27-retromer complex (Probable). Interacts with VPS26A, VPS26B, VPS29, SNX1, SNX2, IGF2R, SNX3, GOLPH3, LRRK2, SLC11A2, WASHC2A, WASHC2C, FKBP15, WASHC1, RAB7A, SNX27, WASHC5, EHD1 (PubMed:11102511, PubMed:15078903, PubMed:17868075, PubMed:17891154, PubMed:19531583, PubMed:19553991, PubMed:21725319, PubMed:22070227, PubMed:22513087, PubMed:23331060, PubMed:23395371, PubMed:23563491, PubMed:24344282, PubMed:24980502, PubMed:30213940). Interacts with MAGEL2; leading to recruitment of the TRIM27:MAGEL2 E3 ubiquitin ligase complex retromer-containing endosomes (PubMed:23452853). Interacts with SORCS2 (By similarity).</text>
</comment>
<comment type="subunit">
    <text evidence="23">(Microbial infection) Interacts with human papillomavirus 16 minor capsid protein L2 (via C-terminus); this interaction mediates the transport of the capsid from the early endosome to the Golgi apparatus.</text>
</comment>
<comment type="interaction">
    <interactant intactId="EBI-1054634">
        <id>Q96QK1</id>
    </interactant>
    <interactant intactId="EBI-77613">
        <id>P05067</id>
        <label>APP</label>
    </interactant>
    <organismsDiffer>false</organismsDiffer>
    <experiments>3</experiments>
</comment>
<comment type="interaction">
    <interactant intactId="EBI-1054634">
        <id>Q96QK1</id>
    </interactant>
    <interactant intactId="EBI-2822329">
        <id>Q13596</id>
        <label>SNX1</label>
    </interactant>
    <organismsDiffer>false</organismsDiffer>
    <experiments>2</experiments>
</comment>
<comment type="interaction">
    <interactant intactId="EBI-1054634">
        <id>Q96QK1</id>
    </interactant>
    <interactant intactId="EBI-742381">
        <id>Q92609</id>
        <label>TBC1D5</label>
    </interactant>
    <organismsDiffer>false</organismsDiffer>
    <experiments>10</experiments>
</comment>
<comment type="interaction">
    <interactant intactId="EBI-1054634">
        <id>Q96QK1</id>
    </interactant>
    <interactant intactId="EBI-1043891">
        <id>O75436</id>
        <label>VPS26A</label>
    </interactant>
    <organismsDiffer>false</organismsDiffer>
    <experiments>29</experiments>
</comment>
<comment type="interaction">
    <interactant intactId="EBI-1054634">
        <id>Q96QK1</id>
    </interactant>
    <interactant intactId="EBI-6151831">
        <id>Q4G0F5</id>
        <label>VPS26B</label>
    </interactant>
    <organismsDiffer>false</organismsDiffer>
    <experiments>11</experiments>
</comment>
<comment type="interaction">
    <interactant intactId="EBI-1054634">
        <id>Q96QK1</id>
    </interactant>
    <interactant intactId="EBI-718596">
        <id>Q9UBQ0</id>
        <label>VPS29</label>
    </interactant>
    <organismsDiffer>false</organismsDiffer>
    <experiments>26</experiments>
</comment>
<comment type="interaction">
    <interactant intactId="EBI-1054634">
        <id>Q96QK1</id>
    </interactant>
    <interactant intactId="EBI-11141397">
        <id>Q9UBQ0-2</id>
        <label>VPS29</label>
    </interactant>
    <organismsDiffer>false</organismsDiffer>
    <experiments>4</experiments>
</comment>
<comment type="interaction">
    <interactant intactId="EBI-1054634">
        <id>Q96QK1</id>
    </interactant>
    <interactant intactId="EBI-948957">
        <id>Q9Y4E1</id>
        <label>WASHC2C</label>
    </interactant>
    <organismsDiffer>false</organismsDiffer>
    <experiments>8</experiments>
</comment>
<comment type="interaction">
    <interactant intactId="EBI-1054634">
        <id>Q96QK1</id>
    </interactant>
    <interactant intactId="EBI-8334188">
        <id>Q9QZ88</id>
        <label>Vps29</label>
    </interactant>
    <organismsDiffer>true</organismsDiffer>
    <experiments>7</experiments>
</comment>
<comment type="subcellular location">
    <subcellularLocation>
        <location>Cytoplasm</location>
    </subcellularLocation>
    <subcellularLocation>
        <location>Membrane</location>
        <topology>Peripheral membrane protein</topology>
    </subcellularLocation>
    <subcellularLocation>
        <location evidence="3 25">Endosome</location>
    </subcellularLocation>
    <subcellularLocation>
        <location evidence="33">Early endosome</location>
    </subcellularLocation>
    <subcellularLocation>
        <location evidence="33">Late endosome</location>
    </subcellularLocation>
    <text evidence="3">Localizes to tubular profiles adjacent to endosomes.</text>
</comment>
<comment type="tissue specificity">
    <text>Ubiquitous. Highly expressed in heart, brain, placenta, skeletal muscle, spleen, thymus, testis, ovary, small intestine, kidney and colon.</text>
</comment>
<comment type="disease" evidence="11 12 15 17 21 22">
    <disease id="DI-03242">
        <name>Parkinson disease 17</name>
        <acronym>PARK17</acronym>
        <description>An autosomal dominant, adult-onset form of Parkinson disease. Parkinson disease is a complex neurodegenerative disorder characterized by bradykinesia, resting tremor, muscular rigidity and postural instability, as well as by a clinically significant response to treatment with levodopa. The pathology involves the loss of dopaminergic neurons in the substantia nigra and the presence of Lewy bodies (intraneuronal accumulations of aggregated proteins), in surviving neurons in various areas of the brain.</description>
        <dbReference type="MIM" id="614203"/>
    </disease>
    <text>The disease is caused by variants affecting the gene represented in this entry.</text>
</comment>
<comment type="similarity">
    <text evidence="33">Belongs to the VPS35 family.</text>
</comment>
<comment type="sequence caution" evidence="33">
    <conflict type="erroneous initiation">
        <sequence resource="EMBL-CDS" id="AAG01989"/>
    </conflict>
    <text>Truncated N-terminus.</text>
</comment>
<comment type="sequence caution" evidence="33">
    <conflict type="erroneous initiation">
        <sequence resource="EMBL-CDS" id="BAA91137"/>
    </conflict>
    <text>Truncated N-terminus.</text>
</comment>
<comment type="sequence caution" evidence="33">
    <conflict type="erroneous initiation">
        <sequence resource="EMBL-CDS" id="BAB14626"/>
    </conflict>
    <text>Extended N-terminus.</text>
</comment>
<dbReference type="EMBL" id="AF191298">
    <property type="protein sequence ID" value="AAF02778.2"/>
    <property type="molecule type" value="mRNA"/>
</dbReference>
<dbReference type="EMBL" id="AF186382">
    <property type="protein sequence ID" value="AAG40619.1"/>
    <property type="molecule type" value="mRNA"/>
</dbReference>
<dbReference type="EMBL" id="AF175265">
    <property type="protein sequence ID" value="AAF89953.1"/>
    <property type="molecule type" value="mRNA"/>
</dbReference>
<dbReference type="EMBL" id="AF183418">
    <property type="protein sequence ID" value="AAG09687.1"/>
    <property type="molecule type" value="mRNA"/>
</dbReference>
<dbReference type="EMBL" id="AK001614">
    <property type="protein sequence ID" value="BAA91790.1"/>
    <property type="molecule type" value="mRNA"/>
</dbReference>
<dbReference type="EMBL" id="AK023650">
    <property type="protein sequence ID" value="BAB14626.1"/>
    <property type="status" value="ALT_INIT"/>
    <property type="molecule type" value="mRNA"/>
</dbReference>
<dbReference type="EMBL" id="AK000395">
    <property type="protein sequence ID" value="BAA91137.1"/>
    <property type="status" value="ALT_INIT"/>
    <property type="molecule type" value="mRNA"/>
</dbReference>
<dbReference type="EMBL" id="AL136888">
    <property type="protein sequence ID" value="CAB66822.1"/>
    <property type="molecule type" value="mRNA"/>
</dbReference>
<dbReference type="EMBL" id="AL512769">
    <property type="protein sequence ID" value="CAC21686.1"/>
    <property type="molecule type" value="mRNA"/>
</dbReference>
<dbReference type="EMBL" id="BC002414">
    <property type="protein sequence ID" value="AAH02414.1"/>
    <property type="molecule type" value="mRNA"/>
</dbReference>
<dbReference type="EMBL" id="BC010362">
    <property type="protein sequence ID" value="AAH10362.1"/>
    <property type="molecule type" value="mRNA"/>
</dbReference>
<dbReference type="EMBL" id="BC093036">
    <property type="protein sequence ID" value="AAH93036.1"/>
    <property type="molecule type" value="mRNA"/>
</dbReference>
<dbReference type="EMBL" id="AY007112">
    <property type="protein sequence ID" value="AAG01989.1"/>
    <property type="status" value="ALT_INIT"/>
    <property type="molecule type" value="mRNA"/>
</dbReference>
<dbReference type="CCDS" id="CCDS10721.1"/>
<dbReference type="PIR" id="JC7516">
    <property type="entry name" value="JC7516"/>
</dbReference>
<dbReference type="RefSeq" id="NP_060676.2">
    <property type="nucleotide sequence ID" value="NM_018206.5"/>
</dbReference>
<dbReference type="PDB" id="2R17">
    <property type="method" value="X-ray"/>
    <property type="resolution" value="2.80 A"/>
    <property type="chains" value="C/D=483-780"/>
</dbReference>
<dbReference type="PDB" id="5F0J">
    <property type="method" value="X-ray"/>
    <property type="resolution" value="2.70 A"/>
    <property type="chains" value="A=14-470"/>
</dbReference>
<dbReference type="PDB" id="5F0K">
    <property type="method" value="X-ray"/>
    <property type="resolution" value="3.07 A"/>
    <property type="chains" value="A/B/C/D/E=14-470"/>
</dbReference>
<dbReference type="PDB" id="5F0L">
    <property type="method" value="X-ray"/>
    <property type="resolution" value="3.20 A"/>
    <property type="chains" value="A=14-470"/>
</dbReference>
<dbReference type="PDB" id="5F0M">
    <property type="method" value="X-ray"/>
    <property type="resolution" value="3.10 A"/>
    <property type="chains" value="A=14-470"/>
</dbReference>
<dbReference type="PDB" id="5F0P">
    <property type="method" value="X-ray"/>
    <property type="resolution" value="2.78 A"/>
    <property type="chains" value="A=14-470"/>
</dbReference>
<dbReference type="PDB" id="5OSH">
    <property type="method" value="X-ray"/>
    <property type="resolution" value="4.30 A"/>
    <property type="chains" value="B/E/H/K=482-780"/>
</dbReference>
<dbReference type="PDB" id="5OSI">
    <property type="method" value="X-ray"/>
    <property type="resolution" value="2.52 A"/>
    <property type="chains" value="B/E/H/K=471-781"/>
</dbReference>
<dbReference type="PDB" id="7BLN">
    <property type="method" value="EM"/>
    <property type="resolution" value="8.90 A"/>
    <property type="chains" value="A/C=1-796"/>
</dbReference>
<dbReference type="PDB" id="7BLO">
    <property type="method" value="EM"/>
    <property type="resolution" value="9.50 A"/>
    <property type="chains" value="A/C=12-363"/>
</dbReference>
<dbReference type="PDB" id="8R02">
    <property type="method" value="X-ray"/>
    <property type="resolution" value="2.50 A"/>
    <property type="chains" value="C/D=476-780"/>
</dbReference>
<dbReference type="PDB" id="8R0J">
    <property type="method" value="X-ray"/>
    <property type="resolution" value="2.40 A"/>
    <property type="chains" value="C/D=476-780"/>
</dbReference>
<dbReference type="PDB" id="8RKS">
    <property type="method" value="X-ray"/>
    <property type="resolution" value="3.10 A"/>
    <property type="chains" value="B/D/F/H=471-781"/>
</dbReference>
<dbReference type="PDBsum" id="2R17"/>
<dbReference type="PDBsum" id="5F0J"/>
<dbReference type="PDBsum" id="5F0K"/>
<dbReference type="PDBsum" id="5F0L"/>
<dbReference type="PDBsum" id="5F0M"/>
<dbReference type="PDBsum" id="5F0P"/>
<dbReference type="PDBsum" id="5OSH"/>
<dbReference type="PDBsum" id="5OSI"/>
<dbReference type="PDBsum" id="7BLN"/>
<dbReference type="PDBsum" id="7BLO"/>
<dbReference type="PDBsum" id="8R02"/>
<dbReference type="PDBsum" id="8R0J"/>
<dbReference type="PDBsum" id="8RKS"/>
<dbReference type="EMDB" id="EMD-12220"/>
<dbReference type="EMDB" id="EMD-12221"/>
<dbReference type="SMR" id="Q96QK1"/>
<dbReference type="BioGRID" id="120855">
    <property type="interactions" value="334"/>
</dbReference>
<dbReference type="ComplexPortal" id="CPX-7842">
    <property type="entry name" value="Retromer complex, VPS26A variant"/>
</dbReference>
<dbReference type="ComplexPortal" id="CPX-7843">
    <property type="entry name" value="Retromer complex, VPS26B variant"/>
</dbReference>
<dbReference type="CORUM" id="Q96QK1"/>
<dbReference type="DIP" id="DIP-29076N"/>
<dbReference type="FunCoup" id="Q96QK1">
    <property type="interactions" value="4197"/>
</dbReference>
<dbReference type="IntAct" id="Q96QK1">
    <property type="interactions" value="184"/>
</dbReference>
<dbReference type="MINT" id="Q96QK1"/>
<dbReference type="STRING" id="9606.ENSP00000299138"/>
<dbReference type="BindingDB" id="Q96QK1"/>
<dbReference type="ChEMBL" id="CHEMBL2216744"/>
<dbReference type="TCDB" id="9.A.3.1.1">
    <property type="family name" value="the sorting nexin27 (snx27)-retromer assembly apparatus (retromeraa) family"/>
</dbReference>
<dbReference type="GlyGen" id="Q96QK1">
    <property type="glycosylation" value="1 site, 1 O-linked glycan (1 site)"/>
</dbReference>
<dbReference type="iPTMnet" id="Q96QK1"/>
<dbReference type="PhosphoSitePlus" id="Q96QK1"/>
<dbReference type="SwissPalm" id="Q96QK1"/>
<dbReference type="BioMuta" id="VPS35"/>
<dbReference type="DMDM" id="25453321"/>
<dbReference type="CPTAC" id="CPTAC-605"/>
<dbReference type="jPOST" id="Q96QK1"/>
<dbReference type="MassIVE" id="Q96QK1"/>
<dbReference type="PaxDb" id="9606-ENSP00000299138"/>
<dbReference type="PeptideAtlas" id="Q96QK1"/>
<dbReference type="ProteomicsDB" id="77884"/>
<dbReference type="Pumba" id="Q96QK1"/>
<dbReference type="Antibodypedia" id="28023">
    <property type="antibodies" value="275 antibodies from 40 providers"/>
</dbReference>
<dbReference type="DNASU" id="55737"/>
<dbReference type="YCharOS" id="Q96QK1">
    <property type="antibodies" value="Tested 13 antibodies from 7 manufacturers"/>
</dbReference>
<dbReference type="Ensembl" id="ENST00000299138.12">
    <property type="protein sequence ID" value="ENSP00000299138.7"/>
    <property type="gene ID" value="ENSG00000069329.19"/>
</dbReference>
<dbReference type="GeneID" id="55737"/>
<dbReference type="KEGG" id="hsa:55737"/>
<dbReference type="MANE-Select" id="ENST00000299138.12">
    <property type="protein sequence ID" value="ENSP00000299138.7"/>
    <property type="RefSeq nucleotide sequence ID" value="NM_018206.6"/>
    <property type="RefSeq protein sequence ID" value="NP_060676.2"/>
</dbReference>
<dbReference type="UCSC" id="uc002eef.5">
    <property type="organism name" value="human"/>
</dbReference>
<dbReference type="AGR" id="HGNC:13487"/>
<dbReference type="CTD" id="55737"/>
<dbReference type="DisGeNET" id="55737"/>
<dbReference type="GeneCards" id="VPS35"/>
<dbReference type="GeneReviews" id="VPS35"/>
<dbReference type="HGNC" id="HGNC:13487">
    <property type="gene designation" value="VPS35"/>
</dbReference>
<dbReference type="HPA" id="ENSG00000069329">
    <property type="expression patterns" value="Low tissue specificity"/>
</dbReference>
<dbReference type="MalaCards" id="VPS35"/>
<dbReference type="MIM" id="601501">
    <property type="type" value="gene"/>
</dbReference>
<dbReference type="MIM" id="614203">
    <property type="type" value="phenotype"/>
</dbReference>
<dbReference type="neXtProt" id="NX_Q96QK1"/>
<dbReference type="OpenTargets" id="ENSG00000069329"/>
<dbReference type="Orphanet" id="411602">
    <property type="disease" value="Hereditary late-onset Parkinson disease"/>
</dbReference>
<dbReference type="PharmGKB" id="PA37783"/>
<dbReference type="VEuPathDB" id="HostDB:ENSG00000069329"/>
<dbReference type="eggNOG" id="KOG1107">
    <property type="taxonomic scope" value="Eukaryota"/>
</dbReference>
<dbReference type="GeneTree" id="ENSGT00390000007315"/>
<dbReference type="HOGENOM" id="CLU_005836_1_0_1"/>
<dbReference type="InParanoid" id="Q96QK1"/>
<dbReference type="OMA" id="YIRSREY"/>
<dbReference type="OrthoDB" id="10258141at2759"/>
<dbReference type="PAN-GO" id="Q96QK1">
    <property type="GO annotations" value="4 GO annotations based on evolutionary models"/>
</dbReference>
<dbReference type="PhylomeDB" id="Q96QK1"/>
<dbReference type="TreeFam" id="TF105659"/>
<dbReference type="PathwayCommons" id="Q96QK1"/>
<dbReference type="Reactome" id="R-HSA-3238698">
    <property type="pathway name" value="WNT ligand biogenesis and trafficking"/>
</dbReference>
<dbReference type="SignaLink" id="Q96QK1"/>
<dbReference type="SIGNOR" id="Q96QK1"/>
<dbReference type="BioGRID-ORCS" id="55737">
    <property type="hits" value="424 hits in 1189 CRISPR screens"/>
</dbReference>
<dbReference type="CD-CODE" id="FB4E32DD">
    <property type="entry name" value="Presynaptic clusters and postsynaptic densities"/>
</dbReference>
<dbReference type="ChiTaRS" id="VPS35">
    <property type="organism name" value="human"/>
</dbReference>
<dbReference type="EvolutionaryTrace" id="Q96QK1"/>
<dbReference type="GeneWiki" id="VPS35"/>
<dbReference type="GenomeRNAi" id="55737"/>
<dbReference type="Pharos" id="Q96QK1">
    <property type="development level" value="Tbio"/>
</dbReference>
<dbReference type="PRO" id="PR:Q96QK1"/>
<dbReference type="Proteomes" id="UP000005640">
    <property type="component" value="Chromosome 16"/>
</dbReference>
<dbReference type="RNAct" id="Q96QK1">
    <property type="molecule type" value="protein"/>
</dbReference>
<dbReference type="Bgee" id="ENSG00000069329">
    <property type="expression patterns" value="Expressed in ventricular zone and 113 other cell types or tissues"/>
</dbReference>
<dbReference type="ExpressionAtlas" id="Q96QK1">
    <property type="expression patterns" value="baseline and differential"/>
</dbReference>
<dbReference type="GO" id="GO:0005829">
    <property type="term" value="C:cytosol"/>
    <property type="evidence" value="ECO:0000314"/>
    <property type="project" value="UniProtKB"/>
</dbReference>
<dbReference type="GO" id="GO:0098691">
    <property type="term" value="C:dopaminergic synapse"/>
    <property type="evidence" value="ECO:0007669"/>
    <property type="project" value="Ensembl"/>
</dbReference>
<dbReference type="GO" id="GO:0005769">
    <property type="term" value="C:early endosome"/>
    <property type="evidence" value="ECO:0000314"/>
    <property type="project" value="UniProtKB"/>
</dbReference>
<dbReference type="GO" id="GO:0005768">
    <property type="term" value="C:endosome"/>
    <property type="evidence" value="ECO:0000314"/>
    <property type="project" value="UniProtKB"/>
</dbReference>
<dbReference type="GO" id="GO:0010008">
    <property type="term" value="C:endosome membrane"/>
    <property type="evidence" value="ECO:0000314"/>
    <property type="project" value="ParkinsonsUK-UCL"/>
</dbReference>
<dbReference type="GO" id="GO:0070062">
    <property type="term" value="C:extracellular exosome"/>
    <property type="evidence" value="ECO:0007005"/>
    <property type="project" value="UniProtKB"/>
</dbReference>
<dbReference type="GO" id="GO:0098978">
    <property type="term" value="C:glutamatergic synapse"/>
    <property type="evidence" value="ECO:0007669"/>
    <property type="project" value="Ensembl"/>
</dbReference>
<dbReference type="GO" id="GO:0043231">
    <property type="term" value="C:intracellular membrane-bounded organelle"/>
    <property type="evidence" value="ECO:0000314"/>
    <property type="project" value="HPA"/>
</dbReference>
<dbReference type="GO" id="GO:0005770">
    <property type="term" value="C:late endosome"/>
    <property type="evidence" value="ECO:0000318"/>
    <property type="project" value="GO_Central"/>
</dbReference>
<dbReference type="GO" id="GO:0005765">
    <property type="term" value="C:lysosomal membrane"/>
    <property type="evidence" value="ECO:0007005"/>
    <property type="project" value="UniProtKB"/>
</dbReference>
<dbReference type="GO" id="GO:0005764">
    <property type="term" value="C:lysosome"/>
    <property type="evidence" value="ECO:0000314"/>
    <property type="project" value="HPA"/>
</dbReference>
<dbReference type="GO" id="GO:0099073">
    <property type="term" value="C:mitochondrion-derived vesicle"/>
    <property type="evidence" value="ECO:0000314"/>
    <property type="project" value="ParkinsonsUK-UCL"/>
</dbReference>
<dbReference type="GO" id="GO:0043005">
    <property type="term" value="C:neuron projection"/>
    <property type="evidence" value="ECO:0007669"/>
    <property type="project" value="Ensembl"/>
</dbReference>
<dbReference type="GO" id="GO:0043025">
    <property type="term" value="C:neuronal cell body"/>
    <property type="evidence" value="ECO:0007669"/>
    <property type="project" value="Ensembl"/>
</dbReference>
<dbReference type="GO" id="GO:0048471">
    <property type="term" value="C:perinuclear region of cytoplasm"/>
    <property type="evidence" value="ECO:0007669"/>
    <property type="project" value="Ensembl"/>
</dbReference>
<dbReference type="GO" id="GO:0014069">
    <property type="term" value="C:postsynaptic density"/>
    <property type="evidence" value="ECO:0007669"/>
    <property type="project" value="Ensembl"/>
</dbReference>
<dbReference type="GO" id="GO:0098793">
    <property type="term" value="C:presynapse"/>
    <property type="evidence" value="ECO:0007669"/>
    <property type="project" value="Ensembl"/>
</dbReference>
<dbReference type="GO" id="GO:0030904">
    <property type="term" value="C:retromer complex"/>
    <property type="evidence" value="ECO:0000314"/>
    <property type="project" value="UniProtKB"/>
</dbReference>
<dbReference type="GO" id="GO:0030906">
    <property type="term" value="C:retromer, cargo-selective complex"/>
    <property type="evidence" value="ECO:0000314"/>
    <property type="project" value="UniProtKB"/>
</dbReference>
<dbReference type="GO" id="GO:0097422">
    <property type="term" value="C:tubular endosome"/>
    <property type="evidence" value="ECO:0000314"/>
    <property type="project" value="UniProtKB"/>
</dbReference>
<dbReference type="GO" id="GO:0031748">
    <property type="term" value="F:D1 dopamine receptor binding"/>
    <property type="evidence" value="ECO:0000353"/>
    <property type="project" value="ParkinsonsUK-UCL"/>
</dbReference>
<dbReference type="GO" id="GO:0032456">
    <property type="term" value="P:endocytic recycling"/>
    <property type="evidence" value="ECO:0000315"/>
    <property type="project" value="UniProtKB"/>
</dbReference>
<dbReference type="GO" id="GO:0006886">
    <property type="term" value="P:intracellular protein transport"/>
    <property type="evidence" value="ECO:0000318"/>
    <property type="project" value="GO_Central"/>
</dbReference>
<dbReference type="GO" id="GO:0007040">
    <property type="term" value="P:lysosome organization"/>
    <property type="evidence" value="ECO:0007669"/>
    <property type="project" value="Ensembl"/>
</dbReference>
<dbReference type="GO" id="GO:0043653">
    <property type="term" value="P:mitochondrial fragmentation involved in apoptotic process"/>
    <property type="evidence" value="ECO:0000315"/>
    <property type="project" value="ParkinsonsUK-UCL"/>
</dbReference>
<dbReference type="GO" id="GO:0099074">
    <property type="term" value="P:mitochondrion to lysosome vesicle-mediated transport"/>
    <property type="evidence" value="ECO:0000315"/>
    <property type="project" value="ParkinsonsUK-UCL"/>
</dbReference>
<dbReference type="GO" id="GO:0050804">
    <property type="term" value="P:modulation of chemical synaptic transmission"/>
    <property type="evidence" value="ECO:0007669"/>
    <property type="project" value="Ensembl"/>
</dbReference>
<dbReference type="GO" id="GO:0010629">
    <property type="term" value="P:negative regulation of gene expression"/>
    <property type="evidence" value="ECO:0007669"/>
    <property type="project" value="Ensembl"/>
</dbReference>
<dbReference type="GO" id="GO:0050728">
    <property type="term" value="P:negative regulation of inflammatory response"/>
    <property type="evidence" value="ECO:0000316"/>
    <property type="project" value="ParkinsonsUK-UCL"/>
</dbReference>
<dbReference type="GO" id="GO:1902823">
    <property type="term" value="P:negative regulation of late endosome to lysosome transport"/>
    <property type="evidence" value="ECO:0000315"/>
    <property type="project" value="UniProtKB"/>
</dbReference>
<dbReference type="GO" id="GO:1905166">
    <property type="term" value="P:negative regulation of lysosomal protein catabolic process"/>
    <property type="evidence" value="ECO:0007669"/>
    <property type="project" value="Ensembl"/>
</dbReference>
<dbReference type="GO" id="GO:0032463">
    <property type="term" value="P:negative regulation of protein homooligomerization"/>
    <property type="evidence" value="ECO:0007669"/>
    <property type="project" value="Ensembl"/>
</dbReference>
<dbReference type="GO" id="GO:1903828">
    <property type="term" value="P:negative regulation of protein localization"/>
    <property type="evidence" value="ECO:0007669"/>
    <property type="project" value="Ensembl"/>
</dbReference>
<dbReference type="GO" id="GO:0099639">
    <property type="term" value="P:neurotransmitter receptor transport, endosome to plasma membrane"/>
    <property type="evidence" value="ECO:0000314"/>
    <property type="project" value="ParkinsonsUK-UCL"/>
</dbReference>
<dbReference type="GO" id="GO:0098887">
    <property type="term" value="P:neurotransmitter receptor transport, endosome to postsynaptic membrane"/>
    <property type="evidence" value="ECO:0007669"/>
    <property type="project" value="Ensembl"/>
</dbReference>
<dbReference type="GO" id="GO:0090263">
    <property type="term" value="P:positive regulation of canonical Wnt signaling pathway"/>
    <property type="evidence" value="ECO:0007669"/>
    <property type="project" value="Ensembl"/>
</dbReference>
<dbReference type="GO" id="GO:1903181">
    <property type="term" value="P:positive regulation of dopamine biosynthetic process"/>
    <property type="evidence" value="ECO:0007669"/>
    <property type="project" value="Ensembl"/>
</dbReference>
<dbReference type="GO" id="GO:0060161">
    <property type="term" value="P:positive regulation of dopamine receptor signaling pathway"/>
    <property type="evidence" value="ECO:0000314"/>
    <property type="project" value="ParkinsonsUK-UCL"/>
</dbReference>
<dbReference type="GO" id="GO:0010628">
    <property type="term" value="P:positive regulation of gene expression"/>
    <property type="evidence" value="ECO:0000314"/>
    <property type="project" value="ParkinsonsUK-UCL"/>
</dbReference>
<dbReference type="GO" id="GO:0090326">
    <property type="term" value="P:positive regulation of locomotion involved in locomotory behavior"/>
    <property type="evidence" value="ECO:0007669"/>
    <property type="project" value="Ensembl"/>
</dbReference>
<dbReference type="GO" id="GO:0090141">
    <property type="term" value="P:positive regulation of mitochondrial fission"/>
    <property type="evidence" value="ECO:0000315"/>
    <property type="project" value="ParkinsonsUK-UCL"/>
</dbReference>
<dbReference type="GO" id="GO:0045732">
    <property type="term" value="P:positive regulation of protein catabolic process"/>
    <property type="evidence" value="ECO:0000316"/>
    <property type="project" value="ParkinsonsUK-UCL"/>
</dbReference>
<dbReference type="GO" id="GO:1904377">
    <property type="term" value="P:positive regulation of protein localization to cell periphery"/>
    <property type="evidence" value="ECO:0000315"/>
    <property type="project" value="ParkinsonsUK-UCL"/>
</dbReference>
<dbReference type="GO" id="GO:0061357">
    <property type="term" value="P:positive regulation of Wnt protein secretion"/>
    <property type="evidence" value="ECO:0007669"/>
    <property type="project" value="Ensembl"/>
</dbReference>
<dbReference type="GO" id="GO:0031648">
    <property type="term" value="P:protein destabilization"/>
    <property type="evidence" value="ECO:0007669"/>
    <property type="project" value="Ensembl"/>
</dbReference>
<dbReference type="GO" id="GO:0036010">
    <property type="term" value="P:protein localization to endosome"/>
    <property type="evidence" value="ECO:0000315"/>
    <property type="project" value="UniProtKB"/>
</dbReference>
<dbReference type="GO" id="GO:1902950">
    <property type="term" value="P:regulation of dendritic spine maintenance"/>
    <property type="evidence" value="ECO:0000315"/>
    <property type="project" value="ParkinsonsUK-UCL"/>
</dbReference>
<dbReference type="GO" id="GO:0016241">
    <property type="term" value="P:regulation of macroautophagy"/>
    <property type="evidence" value="ECO:0000304"/>
    <property type="project" value="ParkinsonsUK-UCL"/>
</dbReference>
<dbReference type="GO" id="GO:0010821">
    <property type="term" value="P:regulation of mitochondrion organization"/>
    <property type="evidence" value="ECO:0000316"/>
    <property type="project" value="ParkinsonsUK-UCL"/>
</dbReference>
<dbReference type="GO" id="GO:0150052">
    <property type="term" value="P:regulation of postsynapse assembly"/>
    <property type="evidence" value="ECO:0007669"/>
    <property type="project" value="Ensembl"/>
</dbReference>
<dbReference type="GO" id="GO:1905606">
    <property type="term" value="P:regulation of presynapse assembly"/>
    <property type="evidence" value="ECO:0000250"/>
    <property type="project" value="ParkinsonsUK-UCL"/>
</dbReference>
<dbReference type="GO" id="GO:0051246">
    <property type="term" value="P:regulation of protein metabolic process"/>
    <property type="evidence" value="ECO:0000314"/>
    <property type="project" value="ParkinsonsUK-UCL"/>
</dbReference>
<dbReference type="GO" id="GO:0031647">
    <property type="term" value="P:regulation of protein stability"/>
    <property type="evidence" value="ECO:0000315"/>
    <property type="project" value="ParkinsonsUK-UCL"/>
</dbReference>
<dbReference type="GO" id="GO:0090128">
    <property type="term" value="P:regulation of synapse maturation"/>
    <property type="evidence" value="ECO:0007669"/>
    <property type="project" value="Ensembl"/>
</dbReference>
<dbReference type="GO" id="GO:2000331">
    <property type="term" value="P:regulation of terminal button organization"/>
    <property type="evidence" value="ECO:0000315"/>
    <property type="project" value="ParkinsonsUK-UCL"/>
</dbReference>
<dbReference type="GO" id="GO:0042147">
    <property type="term" value="P:retrograde transport, endosome to Golgi"/>
    <property type="evidence" value="ECO:0000315"/>
    <property type="project" value="UniProtKB"/>
</dbReference>
<dbReference type="GO" id="GO:0045056">
    <property type="term" value="P:transcytosis"/>
    <property type="evidence" value="ECO:0000314"/>
    <property type="project" value="UniProtKB"/>
</dbReference>
<dbReference type="GO" id="GO:0099003">
    <property type="term" value="P:vesicle-mediated transport in synapse"/>
    <property type="evidence" value="ECO:0007669"/>
    <property type="project" value="Ensembl"/>
</dbReference>
<dbReference type="GO" id="GO:0050882">
    <property type="term" value="P:voluntary musculoskeletal movement"/>
    <property type="evidence" value="ECO:0007669"/>
    <property type="project" value="Ensembl"/>
</dbReference>
<dbReference type="GO" id="GO:0016055">
    <property type="term" value="P:Wnt signaling pathway"/>
    <property type="evidence" value="ECO:0000303"/>
    <property type="project" value="ParkinsonsUK-UCL"/>
</dbReference>
<dbReference type="FunFam" id="1.25.40.660:FF:000001">
    <property type="entry name" value="Vacuolar protein sorting-associated protein 35"/>
    <property type="match status" value="1"/>
</dbReference>
<dbReference type="Gene3D" id="1.25.40.660">
    <property type="entry name" value="Vacuolar protein sorting-associated protein 35, helical subcomplex Vps35-C"/>
    <property type="match status" value="1"/>
</dbReference>
<dbReference type="InterPro" id="IPR016024">
    <property type="entry name" value="ARM-type_fold"/>
</dbReference>
<dbReference type="InterPro" id="IPR005378">
    <property type="entry name" value="Vps35"/>
</dbReference>
<dbReference type="InterPro" id="IPR042491">
    <property type="entry name" value="Vps35_C"/>
</dbReference>
<dbReference type="PANTHER" id="PTHR11099:SF0">
    <property type="entry name" value="VACUOLAR PROTEIN SORTING-ASSOCIATED PROTEIN 35"/>
    <property type="match status" value="1"/>
</dbReference>
<dbReference type="PANTHER" id="PTHR11099">
    <property type="entry name" value="VACUOLAR SORTING PROTEIN 35"/>
    <property type="match status" value="1"/>
</dbReference>
<dbReference type="Pfam" id="PF03635">
    <property type="entry name" value="Vps35"/>
    <property type="match status" value="1"/>
</dbReference>
<dbReference type="PIRSF" id="PIRSF009375">
    <property type="entry name" value="Retromer_Vps35"/>
    <property type="match status" value="1"/>
</dbReference>
<dbReference type="SUPFAM" id="SSF48371">
    <property type="entry name" value="ARM repeat"/>
    <property type="match status" value="1"/>
</dbReference>
<name>VPS35_HUMAN</name>
<feature type="chain" id="PRO_0000065896" description="Vacuolar protein sorting-associated protein 35">
    <location>
        <begin position="1"/>
        <end position="796"/>
    </location>
</feature>
<feature type="region of interest" description="Interaction with SNX3" evidence="20">
    <location>
        <begin position="25"/>
        <end position="44"/>
    </location>
</feature>
<feature type="region of interest" description="Interaction with SNX3" evidence="20">
    <location>
        <begin position="205"/>
        <end position="215"/>
    </location>
</feature>
<feature type="region of interest" description="Interaction with SLC11A2" evidence="20">
    <location>
        <begin position="438"/>
        <end position="796"/>
    </location>
</feature>
<feature type="region of interest" description="Interaction with IGF2R cytoplasmic domain" evidence="3">
    <location>
        <begin position="500"/>
        <end position="693"/>
    </location>
</feature>
<feature type="modified residue" description="Phosphoserine" evidence="35">
    <location>
        <position position="7"/>
    </location>
</feature>
<feature type="modified residue" description="Phosphoserine" evidence="1">
    <location>
        <position position="783"/>
    </location>
</feature>
<feature type="modified residue" description="Phosphotyrosine" evidence="1">
    <location>
        <position position="791"/>
    </location>
</feature>
<feature type="sequence variant" id="VAR_066653" description="In dbSNP:rs193077277." evidence="12">
    <original>G</original>
    <variation>S</variation>
    <location>
        <position position="51"/>
    </location>
</feature>
<feature type="sequence variant" id="VAR_066654" description="In dbSNP:rs183554824." evidence="12">
    <original>M</original>
    <variation>I</variation>
    <location>
        <position position="57"/>
    </location>
</feature>
<feature type="sequence variant" id="VAR_066655" description="In dbSNP:rs188245364." evidence="12">
    <original>T</original>
    <variation>R</variation>
    <location>
        <position position="82"/>
    </location>
</feature>
<feature type="sequence variant" id="VAR_066656" description="Found in a patient with Parkinson disease; dbSNP:rs192783364." evidence="12">
    <original>I</original>
    <variation>M</variation>
    <location>
        <position position="241"/>
    </location>
</feature>
<feature type="sequence variant" id="VAR_066657" description="Found in a patient with Parkinson disease; dbSNP:rs770029606." evidence="11">
    <original>P</original>
    <variation>S</variation>
    <location>
        <position position="316"/>
    </location>
</feature>
<feature type="sequence variant" id="VAR_080769" description="Found in a consanguineous family with intellectual disability; uncertain significance." evidence="24">
    <original>Q</original>
    <variation>P</variation>
    <location>
        <position position="469"/>
    </location>
</feature>
<feature type="sequence variant" id="VAR_066658" description="Found in a patient with Parkinson disease; dbSNP:rs184277092." evidence="12">
    <original>R</original>
    <variation>W</variation>
    <location>
        <position position="524"/>
    </location>
</feature>
<feature type="sequence variant" id="VAR_054046" description="In dbSNP:rs34687100.">
    <original>V</original>
    <variation>D</variation>
    <location>
        <position position="602"/>
    </location>
</feature>
<feature type="sequence variant" id="VAR_066659" description="In PARK17; decreases interaction with WASHC2C, FKBP15 and the WASH complex; impairs recruitment of the WASH complex to endosomes; shows reduced retrograde transport of selective cargo between lysosomes and the Golgi apparatus; shows a progressive reduction in neurite length and branching; dbSNP:rs188286943." evidence="11 12 15 17 21 22">
    <original>D</original>
    <variation>N</variation>
    <location>
        <position position="620"/>
    </location>
</feature>
<feature type="sequence variant" id="VAR_066660" description="In dbSNP:rs749516404." evidence="11">
    <original>A</original>
    <variation>V</variation>
    <location>
        <position position="737"/>
    </location>
</feature>
<feature type="sequence variant" id="VAR_066661" description="In dbSNP:rs192419029." evidence="12">
    <original>L</original>
    <variation>M</variation>
    <location>
        <position position="774"/>
    </location>
</feature>
<feature type="mutagenesis site" description="Disrupts interaction with VPS26; no effect on interaction with VPS29." evidence="16">
    <original>L</original>
    <variation>P</variation>
    <location>
        <position position="108"/>
    </location>
</feature>
<feature type="mutagenesis site" description="Disrupts interaction with VPS29. Does not effect interaction with VPS26." evidence="16">
    <original>H</original>
    <variation>R</variation>
    <location>
        <position position="675"/>
    </location>
</feature>
<feature type="sequence conflict" description="In Ref. 6; CAB66822." evidence="33" ref="6">
    <original>A</original>
    <variation>S</variation>
    <location>
        <position position="42"/>
    </location>
</feature>
<feature type="sequence conflict" description="In Ref. 5; BAB14626." evidence="33" ref="5">
    <original>I</original>
    <variation>T</variation>
    <location>
        <position position="160"/>
    </location>
</feature>
<feature type="sequence conflict" description="In Ref. 3; AAF89953." evidence="33" ref="3">
    <original>T</original>
    <variation>P</variation>
    <location>
        <position position="168"/>
    </location>
</feature>
<feature type="sequence conflict" description="In Ref. 7; AAH10362." evidence="33" ref="7">
    <original>S</original>
    <variation>F</variation>
    <location>
        <position position="453"/>
    </location>
</feature>
<feature type="sequence conflict" description="In Ref. 5; BAA91790." evidence="33" ref="5">
    <original>R</original>
    <variation>G</variation>
    <location>
        <position position="526"/>
    </location>
</feature>
<feature type="sequence conflict" description="In Ref. 5; BAA91790." evidence="33" ref="5">
    <original>K</original>
    <variation>E</variation>
    <location>
        <position position="694"/>
    </location>
</feature>
<feature type="sequence conflict" description="In Ref. 5; BAA91137." evidence="33" ref="5">
    <original>L</original>
    <variation>H</variation>
    <location>
        <position position="796"/>
    </location>
</feature>
<feature type="helix" evidence="36">
    <location>
        <begin position="14"/>
        <end position="35"/>
    </location>
</feature>
<feature type="helix" evidence="36">
    <location>
        <begin position="39"/>
        <end position="50"/>
    </location>
</feature>
<feature type="helix" evidence="36">
    <location>
        <begin position="51"/>
        <end position="54"/>
    </location>
</feature>
<feature type="strand" evidence="36">
    <location>
        <begin position="56"/>
        <end position="58"/>
    </location>
</feature>
<feature type="helix" evidence="36">
    <location>
        <begin position="60"/>
        <end position="86"/>
    </location>
</feature>
<feature type="helix" evidence="36">
    <location>
        <begin position="94"/>
        <end position="97"/>
    </location>
</feature>
<feature type="helix" evidence="36">
    <location>
        <begin position="98"/>
        <end position="100"/>
    </location>
</feature>
<feature type="helix" evidence="36">
    <location>
        <begin position="104"/>
        <end position="121"/>
    </location>
</feature>
<feature type="helix" evidence="36">
    <location>
        <begin position="123"/>
        <end position="125"/>
    </location>
</feature>
<feature type="helix" evidence="36">
    <location>
        <begin position="126"/>
        <end position="136"/>
    </location>
</feature>
<feature type="helix" evidence="36">
    <location>
        <begin position="137"/>
        <end position="139"/>
    </location>
</feature>
<feature type="helix" evidence="36">
    <location>
        <begin position="143"/>
        <end position="156"/>
    </location>
</feature>
<feature type="turn" evidence="36">
    <location>
        <begin position="157"/>
        <end position="160"/>
    </location>
</feature>
<feature type="helix" evidence="36">
    <location>
        <begin position="176"/>
        <end position="196"/>
    </location>
</feature>
<feature type="helix" evidence="36">
    <location>
        <begin position="197"/>
        <end position="199"/>
    </location>
</feature>
<feature type="helix" evidence="36">
    <location>
        <begin position="206"/>
        <end position="229"/>
    </location>
</feature>
<feature type="helix" evidence="36">
    <location>
        <begin position="235"/>
        <end position="240"/>
    </location>
</feature>
<feature type="helix" evidence="36">
    <location>
        <begin position="242"/>
        <end position="252"/>
    </location>
</feature>
<feature type="helix" evidence="36">
    <location>
        <begin position="256"/>
        <end position="269"/>
    </location>
</feature>
<feature type="helix" evidence="36">
    <location>
        <begin position="272"/>
        <end position="277"/>
    </location>
</feature>
<feature type="helix" evidence="36">
    <location>
        <begin position="279"/>
        <end position="286"/>
    </location>
</feature>
<feature type="helix" evidence="36">
    <location>
        <begin position="295"/>
        <end position="310"/>
    </location>
</feature>
<feature type="strand" evidence="36">
    <location>
        <begin position="313"/>
        <end position="315"/>
    </location>
</feature>
<feature type="strand" evidence="36">
    <location>
        <begin position="320"/>
        <end position="322"/>
    </location>
</feature>
<feature type="helix" evidence="36">
    <location>
        <begin position="324"/>
        <end position="338"/>
    </location>
</feature>
<feature type="helix" evidence="36">
    <location>
        <begin position="344"/>
        <end position="361"/>
    </location>
</feature>
<feature type="helix" evidence="36">
    <location>
        <begin position="366"/>
        <end position="382"/>
    </location>
</feature>
<feature type="strand" evidence="37">
    <location>
        <begin position="390"/>
        <end position="392"/>
    </location>
</feature>
<feature type="helix" evidence="36">
    <location>
        <begin position="393"/>
        <end position="408"/>
    </location>
</feature>
<feature type="helix" evidence="36">
    <location>
        <begin position="413"/>
        <end position="416"/>
    </location>
</feature>
<feature type="turn" evidence="37">
    <location>
        <begin position="419"/>
        <end position="422"/>
    </location>
</feature>
<feature type="helix" evidence="36">
    <location>
        <begin position="423"/>
        <end position="427"/>
    </location>
</feature>
<feature type="helix" evidence="36">
    <location>
        <begin position="430"/>
        <end position="446"/>
    </location>
</feature>
<feature type="helix" evidence="36">
    <location>
        <begin position="454"/>
        <end position="468"/>
    </location>
</feature>
<feature type="helix" evidence="38">
    <location>
        <begin position="485"/>
        <end position="498"/>
    </location>
</feature>
<feature type="helix" evidence="38">
    <location>
        <begin position="503"/>
        <end position="518"/>
    </location>
</feature>
<feature type="helix" evidence="38">
    <location>
        <begin position="521"/>
        <end position="528"/>
    </location>
</feature>
<feature type="helix" evidence="38">
    <location>
        <begin position="530"/>
        <end position="545"/>
    </location>
</feature>
<feature type="turn" evidence="38">
    <location>
        <begin position="546"/>
        <end position="549"/>
    </location>
</feature>
<feature type="helix" evidence="38">
    <location>
        <begin position="553"/>
        <end position="573"/>
    </location>
</feature>
<feature type="helix" evidence="38">
    <location>
        <begin position="578"/>
        <end position="594"/>
    </location>
</feature>
<feature type="helix" evidence="38">
    <location>
        <begin position="599"/>
        <end position="617"/>
    </location>
</feature>
<feature type="helix" evidence="38">
    <location>
        <begin position="621"/>
        <end position="637"/>
    </location>
</feature>
<feature type="helix" evidence="38">
    <location>
        <begin position="643"/>
        <end position="657"/>
    </location>
</feature>
<feature type="helix" evidence="38">
    <location>
        <begin position="663"/>
        <end position="672"/>
    </location>
</feature>
<feature type="helix" evidence="38">
    <location>
        <begin position="674"/>
        <end position="678"/>
    </location>
</feature>
<feature type="strand" evidence="38">
    <location>
        <begin position="685"/>
        <end position="687"/>
    </location>
</feature>
<feature type="helix" evidence="38">
    <location>
        <begin position="693"/>
        <end position="708"/>
    </location>
</feature>
<feature type="helix" evidence="38">
    <location>
        <begin position="713"/>
        <end position="732"/>
    </location>
</feature>
<feature type="helix" evidence="38">
    <location>
        <begin position="740"/>
        <end position="753"/>
    </location>
</feature>
<feature type="helix" evidence="38">
    <location>
        <begin position="754"/>
        <end position="756"/>
    </location>
</feature>
<feature type="helix" evidence="38">
    <location>
        <begin position="761"/>
        <end position="778"/>
    </location>
</feature>